<keyword id="KW-0031">Aminopeptidase</keyword>
<keyword id="KW-0378">Hydrolase</keyword>
<keyword id="KW-0464">Manganese</keyword>
<keyword id="KW-0479">Metal-binding</keyword>
<keyword id="KW-0482">Metalloprotease</keyword>
<keyword id="KW-0645">Protease</keyword>
<keyword id="KW-1185">Reference proteome</keyword>
<accession>Q0CZM6</accession>
<evidence type="ECO:0000250" key="1"/>
<evidence type="ECO:0000305" key="2"/>
<gene>
    <name type="ORF">ATEG_00858</name>
</gene>
<feature type="chain" id="PRO_0000411829" description="Probable Xaa-Pro aminopeptidase ATEG_00858">
    <location>
        <begin position="1"/>
        <end position="488"/>
    </location>
</feature>
<feature type="binding site" evidence="1">
    <location>
        <position position="273"/>
    </location>
    <ligand>
        <name>Mn(2+)</name>
        <dbReference type="ChEBI" id="CHEBI:29035"/>
        <label>2</label>
    </ligand>
</feature>
<feature type="binding site" evidence="1">
    <location>
        <position position="284"/>
    </location>
    <ligand>
        <name>Mn(2+)</name>
        <dbReference type="ChEBI" id="CHEBI:29035"/>
        <label>1</label>
    </ligand>
</feature>
<feature type="binding site" evidence="1">
    <location>
        <position position="284"/>
    </location>
    <ligand>
        <name>Mn(2+)</name>
        <dbReference type="ChEBI" id="CHEBI:29035"/>
        <label>2</label>
    </ligand>
</feature>
<feature type="binding site" evidence="1">
    <location>
        <position position="417"/>
    </location>
    <ligand>
        <name>Mn(2+)</name>
        <dbReference type="ChEBI" id="CHEBI:29035"/>
        <label>1</label>
    </ligand>
</feature>
<feature type="binding site" evidence="1">
    <location>
        <position position="456"/>
    </location>
    <ligand>
        <name>Mn(2+)</name>
        <dbReference type="ChEBI" id="CHEBI:29035"/>
        <label>1</label>
    </ligand>
</feature>
<feature type="binding site" evidence="1">
    <location>
        <position position="456"/>
    </location>
    <ligand>
        <name>Mn(2+)</name>
        <dbReference type="ChEBI" id="CHEBI:29035"/>
        <label>2</label>
    </ligand>
</feature>
<comment type="function">
    <text evidence="1">Catalyzes the removal of a penultimate prolyl residue from the N-termini of peptides.</text>
</comment>
<comment type="catalytic activity">
    <reaction>
        <text>Release of any N-terminal amino acid, including proline, that is linked to proline, even from a dipeptide or tripeptide.</text>
        <dbReference type="EC" id="3.4.11.9"/>
    </reaction>
</comment>
<comment type="cofactor">
    <cofactor evidence="1">
        <name>Mn(2+)</name>
        <dbReference type="ChEBI" id="CHEBI:29035"/>
    </cofactor>
    <text evidence="1">Binds 2 manganese ions per subunit.</text>
</comment>
<comment type="similarity">
    <text evidence="2">Belongs to the peptidase M24B family.</text>
</comment>
<reference key="1">
    <citation type="submission" date="2005-09" db="EMBL/GenBank/DDBJ databases">
        <title>Annotation of the Aspergillus terreus NIH2624 genome.</title>
        <authorList>
            <person name="Birren B.W."/>
            <person name="Lander E.S."/>
            <person name="Galagan J.E."/>
            <person name="Nusbaum C."/>
            <person name="Devon K."/>
            <person name="Henn M."/>
            <person name="Ma L.-J."/>
            <person name="Jaffe D.B."/>
            <person name="Butler J."/>
            <person name="Alvarez P."/>
            <person name="Gnerre S."/>
            <person name="Grabherr M."/>
            <person name="Kleber M."/>
            <person name="Mauceli E.W."/>
            <person name="Brockman W."/>
            <person name="Rounsley S."/>
            <person name="Young S.K."/>
            <person name="LaButti K."/>
            <person name="Pushparaj V."/>
            <person name="DeCaprio D."/>
            <person name="Crawford M."/>
            <person name="Koehrsen M."/>
            <person name="Engels R."/>
            <person name="Montgomery P."/>
            <person name="Pearson M."/>
            <person name="Howarth C."/>
            <person name="Larson L."/>
            <person name="Luoma S."/>
            <person name="White J."/>
            <person name="Alvarado L."/>
            <person name="Kodira C.D."/>
            <person name="Zeng Q."/>
            <person name="Oleary S."/>
            <person name="Yandava C."/>
            <person name="Denning D.W."/>
            <person name="Nierman W.C."/>
            <person name="Milne T."/>
            <person name="Madden K."/>
        </authorList>
    </citation>
    <scope>NUCLEOTIDE SEQUENCE [LARGE SCALE GENOMIC DNA]</scope>
    <source>
        <strain>NIH 2624 / FGSC A1156</strain>
    </source>
</reference>
<name>AMPP2_ASPTN</name>
<sequence length="488" mass="54835">MRAPLSTHDRCLVPDTYDIRLTITGNDGDKYPAKQHARRAAMKLGVSAGLVYLVGQPTINWGDSDQPRPFRQRRYFYYLSGVDEADCYLTYDIHSDLLTLYVPDFDLRHAIWMGPTLTIDEARHRYDVDRVCYFSSLQGHLESWIDKHNNSSPIYILHDTQKPHVPSRENVYLDGEHLLPAMDAARMVKDDYEIRMIRKANQISALAHRKVLENIHRMTNETEIEGLFLATCVSHGAKNQSYEIIAGSGKNAATLHYVKNNEPLHGRQLVCLDAGAEWDCYASDVTRTIPLGPDWASEYVRNIYCLVEKMQETCISQIRRGVTMKSLQDSAHFIAIQGLKDLGVLHDYDVLEIFHSGASAVFFPHGLGHHVGLEVHDVSVQPNAASAAAEGPRQTFFVPMATQSSPGLEPGMVVTIEPGVYFSELAIANARKQPLAKYINFDVAEKYIPIGGVRIEDDILVTHSGYENLTTAPKGEEMLEIIRRAIDN</sequence>
<protein>
    <recommendedName>
        <fullName>Probable Xaa-Pro aminopeptidase ATEG_00858</fullName>
        <ecNumber>3.4.11.9</ecNumber>
    </recommendedName>
    <alternativeName>
        <fullName>Aminoacylproline aminopeptidase</fullName>
    </alternativeName>
    <alternativeName>
        <fullName>Prolidase</fullName>
    </alternativeName>
</protein>
<organism>
    <name type="scientific">Aspergillus terreus (strain NIH 2624 / FGSC A1156)</name>
    <dbReference type="NCBI Taxonomy" id="341663"/>
    <lineage>
        <taxon>Eukaryota</taxon>
        <taxon>Fungi</taxon>
        <taxon>Dikarya</taxon>
        <taxon>Ascomycota</taxon>
        <taxon>Pezizomycotina</taxon>
        <taxon>Eurotiomycetes</taxon>
        <taxon>Eurotiomycetidae</taxon>
        <taxon>Eurotiales</taxon>
        <taxon>Aspergillaceae</taxon>
        <taxon>Aspergillus</taxon>
        <taxon>Aspergillus subgen. Circumdati</taxon>
    </lineage>
</organism>
<dbReference type="EC" id="3.4.11.9"/>
<dbReference type="EMBL" id="CH476594">
    <property type="protein sequence ID" value="EAU39504.1"/>
    <property type="molecule type" value="Genomic_DNA"/>
</dbReference>
<dbReference type="RefSeq" id="XP_001210944.1">
    <property type="nucleotide sequence ID" value="XM_001210944.1"/>
</dbReference>
<dbReference type="SMR" id="Q0CZM6"/>
<dbReference type="STRING" id="341663.Q0CZM6"/>
<dbReference type="EnsemblFungi" id="EAU39504">
    <property type="protein sequence ID" value="EAU39504"/>
    <property type="gene ID" value="ATEG_00858"/>
</dbReference>
<dbReference type="GeneID" id="4355619"/>
<dbReference type="VEuPathDB" id="FungiDB:ATEG_00858"/>
<dbReference type="eggNOG" id="KOG2737">
    <property type="taxonomic scope" value="Eukaryota"/>
</dbReference>
<dbReference type="HOGENOM" id="CLU_017266_1_2_1"/>
<dbReference type="OMA" id="YELRMIR"/>
<dbReference type="OrthoDB" id="10261878at2759"/>
<dbReference type="Proteomes" id="UP000007963">
    <property type="component" value="Unassembled WGS sequence"/>
</dbReference>
<dbReference type="GO" id="GO:0030145">
    <property type="term" value="F:manganese ion binding"/>
    <property type="evidence" value="ECO:0007669"/>
    <property type="project" value="InterPro"/>
</dbReference>
<dbReference type="GO" id="GO:0070006">
    <property type="term" value="F:metalloaminopeptidase activity"/>
    <property type="evidence" value="ECO:0007669"/>
    <property type="project" value="InterPro"/>
</dbReference>
<dbReference type="GO" id="GO:0006508">
    <property type="term" value="P:proteolysis"/>
    <property type="evidence" value="ECO:0007669"/>
    <property type="project" value="UniProtKB-KW"/>
</dbReference>
<dbReference type="Gene3D" id="3.90.230.10">
    <property type="entry name" value="Creatinase/methionine aminopeptidase superfamily"/>
    <property type="match status" value="1"/>
</dbReference>
<dbReference type="Gene3D" id="3.40.350.10">
    <property type="entry name" value="Creatinase/prolidase N-terminal domain"/>
    <property type="match status" value="1"/>
</dbReference>
<dbReference type="InterPro" id="IPR007865">
    <property type="entry name" value="Aminopep_P_N"/>
</dbReference>
<dbReference type="InterPro" id="IPR029149">
    <property type="entry name" value="Creatin/AminoP/Spt16_N"/>
</dbReference>
<dbReference type="InterPro" id="IPR036005">
    <property type="entry name" value="Creatinase/aminopeptidase-like"/>
</dbReference>
<dbReference type="InterPro" id="IPR000994">
    <property type="entry name" value="Pept_M24"/>
</dbReference>
<dbReference type="InterPro" id="IPR001131">
    <property type="entry name" value="Peptidase_M24B_aminopep-P_CS"/>
</dbReference>
<dbReference type="InterPro" id="IPR052433">
    <property type="entry name" value="X-Pro_dipept-like"/>
</dbReference>
<dbReference type="PANTHER" id="PTHR43226">
    <property type="entry name" value="XAA-PRO AMINOPEPTIDASE 3"/>
    <property type="match status" value="1"/>
</dbReference>
<dbReference type="PANTHER" id="PTHR43226:SF3">
    <property type="entry name" value="XAA-PRO AMINOPEPTIDASE AN0832-RELATED"/>
    <property type="match status" value="1"/>
</dbReference>
<dbReference type="Pfam" id="PF05195">
    <property type="entry name" value="AMP_N"/>
    <property type="match status" value="1"/>
</dbReference>
<dbReference type="Pfam" id="PF00557">
    <property type="entry name" value="Peptidase_M24"/>
    <property type="match status" value="1"/>
</dbReference>
<dbReference type="SMART" id="SM01011">
    <property type="entry name" value="AMP_N"/>
    <property type="match status" value="1"/>
</dbReference>
<dbReference type="SUPFAM" id="SSF55920">
    <property type="entry name" value="Creatinase/aminopeptidase"/>
    <property type="match status" value="1"/>
</dbReference>
<dbReference type="SUPFAM" id="SSF53092">
    <property type="entry name" value="Creatinase/prolidase N-terminal domain"/>
    <property type="match status" value="1"/>
</dbReference>
<dbReference type="PROSITE" id="PS00491">
    <property type="entry name" value="PROLINE_PEPTIDASE"/>
    <property type="match status" value="1"/>
</dbReference>
<proteinExistence type="inferred from homology"/>